<proteinExistence type="evidence at transcript level"/>
<feature type="chain" id="PRO_0000401992" description="Methylthioribose-1-phosphate isomerase">
    <location>
        <begin position="1"/>
        <end position="374"/>
    </location>
</feature>
<feature type="active site" description="Proton donor" evidence="1">
    <location>
        <position position="251"/>
    </location>
</feature>
<feature type="site" description="Transition state stabilizer" evidence="1">
    <location>
        <position position="171"/>
    </location>
</feature>
<keyword id="KW-0028">Amino-acid biosynthesis</keyword>
<keyword id="KW-0963">Cytoplasm</keyword>
<keyword id="KW-0413">Isomerase</keyword>
<keyword id="KW-0486">Methionine biosynthesis</keyword>
<keyword id="KW-0539">Nucleus</keyword>
<keyword id="KW-1185">Reference proteome</keyword>
<protein>
    <recommendedName>
        <fullName evidence="1">Methylthioribose-1-phosphate isomerase</fullName>
        <shortName evidence="1">M1Pi</shortName>
        <shortName evidence="1">MTR-1-P isomerase</shortName>
        <ecNumber evidence="1">5.3.1.23</ecNumber>
    </recommendedName>
    <alternativeName>
        <fullName evidence="1">S-methyl-5-thioribose-1-phosphate isomerase</fullName>
    </alternativeName>
    <alternativeName>
        <fullName evidence="1">Translation initiation factor eIF-2B subunit alpha/beta/delta-like protein</fullName>
    </alternativeName>
</protein>
<reference key="1">
    <citation type="journal article" date="2005" name="PLoS Biol.">
        <title>The genomes of Oryza sativa: a history of duplications.</title>
        <authorList>
            <person name="Yu J."/>
            <person name="Wang J."/>
            <person name="Lin W."/>
            <person name="Li S."/>
            <person name="Li H."/>
            <person name="Zhou J."/>
            <person name="Ni P."/>
            <person name="Dong W."/>
            <person name="Hu S."/>
            <person name="Zeng C."/>
            <person name="Zhang J."/>
            <person name="Zhang Y."/>
            <person name="Li R."/>
            <person name="Xu Z."/>
            <person name="Li S."/>
            <person name="Li X."/>
            <person name="Zheng H."/>
            <person name="Cong L."/>
            <person name="Lin L."/>
            <person name="Yin J."/>
            <person name="Geng J."/>
            <person name="Li G."/>
            <person name="Shi J."/>
            <person name="Liu J."/>
            <person name="Lv H."/>
            <person name="Li J."/>
            <person name="Wang J."/>
            <person name="Deng Y."/>
            <person name="Ran L."/>
            <person name="Shi X."/>
            <person name="Wang X."/>
            <person name="Wu Q."/>
            <person name="Li C."/>
            <person name="Ren X."/>
            <person name="Wang J."/>
            <person name="Wang X."/>
            <person name="Li D."/>
            <person name="Liu D."/>
            <person name="Zhang X."/>
            <person name="Ji Z."/>
            <person name="Zhao W."/>
            <person name="Sun Y."/>
            <person name="Zhang Z."/>
            <person name="Bao J."/>
            <person name="Han Y."/>
            <person name="Dong L."/>
            <person name="Ji J."/>
            <person name="Chen P."/>
            <person name="Wu S."/>
            <person name="Liu J."/>
            <person name="Xiao Y."/>
            <person name="Bu D."/>
            <person name="Tan J."/>
            <person name="Yang L."/>
            <person name="Ye C."/>
            <person name="Zhang J."/>
            <person name="Xu J."/>
            <person name="Zhou Y."/>
            <person name="Yu Y."/>
            <person name="Zhang B."/>
            <person name="Zhuang S."/>
            <person name="Wei H."/>
            <person name="Liu B."/>
            <person name="Lei M."/>
            <person name="Yu H."/>
            <person name="Li Y."/>
            <person name="Xu H."/>
            <person name="Wei S."/>
            <person name="He X."/>
            <person name="Fang L."/>
            <person name="Zhang Z."/>
            <person name="Zhang Y."/>
            <person name="Huang X."/>
            <person name="Su Z."/>
            <person name="Tong W."/>
            <person name="Li J."/>
            <person name="Tong Z."/>
            <person name="Li S."/>
            <person name="Ye J."/>
            <person name="Wang L."/>
            <person name="Fang L."/>
            <person name="Lei T."/>
            <person name="Chen C.-S."/>
            <person name="Chen H.-C."/>
            <person name="Xu Z."/>
            <person name="Li H."/>
            <person name="Huang H."/>
            <person name="Zhang F."/>
            <person name="Xu H."/>
            <person name="Li N."/>
            <person name="Zhao C."/>
            <person name="Li S."/>
            <person name="Dong L."/>
            <person name="Huang Y."/>
            <person name="Li L."/>
            <person name="Xi Y."/>
            <person name="Qi Q."/>
            <person name="Li W."/>
            <person name="Zhang B."/>
            <person name="Hu W."/>
            <person name="Zhang Y."/>
            <person name="Tian X."/>
            <person name="Jiao Y."/>
            <person name="Liang X."/>
            <person name="Jin J."/>
            <person name="Gao L."/>
            <person name="Zheng W."/>
            <person name="Hao B."/>
            <person name="Liu S.-M."/>
            <person name="Wang W."/>
            <person name="Yuan L."/>
            <person name="Cao M."/>
            <person name="McDermott J."/>
            <person name="Samudrala R."/>
            <person name="Wang J."/>
            <person name="Wong G.K.-S."/>
            <person name="Yang H."/>
        </authorList>
    </citation>
    <scope>NUCLEOTIDE SEQUENCE [LARGE SCALE GENOMIC DNA]</scope>
    <source>
        <strain>cv. 93-11</strain>
    </source>
</reference>
<reference key="2">
    <citation type="journal article" date="2007" name="Plant Mol. Biol.">
        <title>A collection of 10,096 indica rice full-length cDNAs reveals highly expressed sequence divergence between Oryza sativa indica and japonica subspecies.</title>
        <authorList>
            <person name="Liu X."/>
            <person name="Lu T."/>
            <person name="Yu S."/>
            <person name="Li Y."/>
            <person name="Huang Y."/>
            <person name="Huang T."/>
            <person name="Zhang L."/>
            <person name="Zhu J."/>
            <person name="Zhao Q."/>
            <person name="Fan D."/>
            <person name="Mu J."/>
            <person name="Shangguan Y."/>
            <person name="Feng Q."/>
            <person name="Guan J."/>
            <person name="Ying K."/>
            <person name="Zhang Y."/>
            <person name="Lin Z."/>
            <person name="Sun Z."/>
            <person name="Qian Q."/>
            <person name="Lu Y."/>
            <person name="Han B."/>
        </authorList>
    </citation>
    <scope>NUCLEOTIDE SEQUENCE [LARGE SCALE MRNA]</scope>
    <source>
        <strain>cv. Guang-Lu-Ai No.4</strain>
    </source>
</reference>
<comment type="function">
    <text evidence="1">Catalyzes the interconversion of methylthioribose-1-phosphate (MTR-1-P) into methylthioribulose-1-phosphate (MTRu-1-P).</text>
</comment>
<comment type="catalytic activity">
    <reaction evidence="1">
        <text>5-(methylsulfanyl)-alpha-D-ribose 1-phosphate = 5-(methylsulfanyl)-D-ribulose 1-phosphate</text>
        <dbReference type="Rhea" id="RHEA:19989"/>
        <dbReference type="ChEBI" id="CHEBI:58533"/>
        <dbReference type="ChEBI" id="CHEBI:58548"/>
        <dbReference type="EC" id="5.3.1.23"/>
    </reaction>
</comment>
<comment type="pathway">
    <text evidence="1">Amino-acid biosynthesis; L-methionine biosynthesis via salvage pathway; L-methionine from S-methyl-5-thio-alpha-D-ribose 1-phosphate: step 1/6.</text>
</comment>
<comment type="subcellular location">
    <subcellularLocation>
        <location evidence="1">Cytoplasm</location>
    </subcellularLocation>
    <subcellularLocation>
        <location evidence="1">Nucleus</location>
    </subcellularLocation>
</comment>
<comment type="similarity">
    <text evidence="1">Belongs to the eIF-2B alpha/beta/delta subunits family. MtnA subfamily.</text>
</comment>
<dbReference type="EC" id="5.3.1.23" evidence="1"/>
<dbReference type="EMBL" id="CM000136">
    <property type="protein sequence ID" value="EAY80374.1"/>
    <property type="molecule type" value="Genomic_DNA"/>
</dbReference>
<dbReference type="EMBL" id="CT830329">
    <property type="status" value="NOT_ANNOTATED_CDS"/>
    <property type="molecule type" value="mRNA"/>
</dbReference>
<dbReference type="SMR" id="A2ZCP0"/>
<dbReference type="STRING" id="39946.A2ZCP0"/>
<dbReference type="EnsemblPlants" id="BGIOSGA035012-TA">
    <property type="protein sequence ID" value="BGIOSGA035012-PA"/>
    <property type="gene ID" value="BGIOSGA035012"/>
</dbReference>
<dbReference type="EnsemblPlants" id="OsIR64_11g0007320.01">
    <property type="protein sequence ID" value="OsIR64_11g0007320.01"/>
    <property type="gene ID" value="OsIR64_11g0007320"/>
</dbReference>
<dbReference type="EnsemblPlants" id="OsIR64_11g0007320.02">
    <property type="protein sequence ID" value="OsIR64_11g0007320.02"/>
    <property type="gene ID" value="OsIR64_11g0007320"/>
</dbReference>
<dbReference type="EnsemblPlants" id="OsKYG_11g0007320.01">
    <property type="protein sequence ID" value="OsKYG_11g0007320.01"/>
    <property type="gene ID" value="OsKYG_11g0007320"/>
</dbReference>
<dbReference type="EnsemblPlants" id="OsKYG_11g0007320.02">
    <property type="protein sequence ID" value="OsKYG_11g0007320.02"/>
    <property type="gene ID" value="OsKYG_11g0007320"/>
</dbReference>
<dbReference type="EnsemblPlants" id="OsLaMu_11g0007440.01">
    <property type="protein sequence ID" value="OsLaMu_11g0007440.01"/>
    <property type="gene ID" value="OsLaMu_11g0007440"/>
</dbReference>
<dbReference type="EnsemblPlants" id="OsLaMu_11g0007440.02">
    <property type="protein sequence ID" value="OsLaMu_11g0007440.02"/>
    <property type="gene ID" value="OsLaMu_11g0007440"/>
</dbReference>
<dbReference type="EnsemblPlants" id="OsLiXu_11g0007420.01">
    <property type="protein sequence ID" value="OsLiXu_11g0007420.01"/>
    <property type="gene ID" value="OsLiXu_11g0007420"/>
</dbReference>
<dbReference type="EnsemblPlants" id="OsLiXu_11g0007420.02">
    <property type="protein sequence ID" value="OsLiXu_11g0007420.02"/>
    <property type="gene ID" value="OsLiXu_11g0007420"/>
</dbReference>
<dbReference type="EnsemblPlants" id="OsMH63_11G007450_01">
    <property type="protein sequence ID" value="OsMH63_11G007450_01"/>
    <property type="gene ID" value="OsMH63_11G007450"/>
</dbReference>
<dbReference type="EnsemblPlants" id="OsMH63_11G007450_02">
    <property type="protein sequence ID" value="OsMH63_11G007450_02"/>
    <property type="gene ID" value="OsMH63_11G007450"/>
</dbReference>
<dbReference type="EnsemblPlants" id="OsPr106_11g0007320.01">
    <property type="protein sequence ID" value="OsPr106_11g0007320.01"/>
    <property type="gene ID" value="OsPr106_11g0007320"/>
</dbReference>
<dbReference type="EnsemblPlants" id="OsPr106_11g0007320.02">
    <property type="protein sequence ID" value="OsPr106_11g0007320.02"/>
    <property type="gene ID" value="OsPr106_11g0007320"/>
</dbReference>
<dbReference type="EnsemblPlants" id="OsZS97_11G007570_01">
    <property type="protein sequence ID" value="OsZS97_11G007570_01"/>
    <property type="gene ID" value="OsZS97_11G007570"/>
</dbReference>
<dbReference type="EnsemblPlants" id="OsZS97_11G007570_02">
    <property type="protein sequence ID" value="OsZS97_11G007570_02"/>
    <property type="gene ID" value="OsZS97_11G007570"/>
</dbReference>
<dbReference type="Gramene" id="BGIOSGA035012-TA">
    <property type="protein sequence ID" value="BGIOSGA035012-PA"/>
    <property type="gene ID" value="BGIOSGA035012"/>
</dbReference>
<dbReference type="Gramene" id="OsIR64_11g0007320.01">
    <property type="protein sequence ID" value="OsIR64_11g0007320.01"/>
    <property type="gene ID" value="OsIR64_11g0007320"/>
</dbReference>
<dbReference type="Gramene" id="OsIR64_11g0007320.02">
    <property type="protein sequence ID" value="OsIR64_11g0007320.02"/>
    <property type="gene ID" value="OsIR64_11g0007320"/>
</dbReference>
<dbReference type="Gramene" id="OsKYG_11g0007320.01">
    <property type="protein sequence ID" value="OsKYG_11g0007320.01"/>
    <property type="gene ID" value="OsKYG_11g0007320"/>
</dbReference>
<dbReference type="Gramene" id="OsKYG_11g0007320.02">
    <property type="protein sequence ID" value="OsKYG_11g0007320.02"/>
    <property type="gene ID" value="OsKYG_11g0007320"/>
</dbReference>
<dbReference type="Gramene" id="OsLaMu_11g0007440.01">
    <property type="protein sequence ID" value="OsLaMu_11g0007440.01"/>
    <property type="gene ID" value="OsLaMu_11g0007440"/>
</dbReference>
<dbReference type="Gramene" id="OsLaMu_11g0007440.02">
    <property type="protein sequence ID" value="OsLaMu_11g0007440.02"/>
    <property type="gene ID" value="OsLaMu_11g0007440"/>
</dbReference>
<dbReference type="Gramene" id="OsLiXu_11g0007420.01">
    <property type="protein sequence ID" value="OsLiXu_11g0007420.01"/>
    <property type="gene ID" value="OsLiXu_11g0007420"/>
</dbReference>
<dbReference type="Gramene" id="OsLiXu_11g0007420.02">
    <property type="protein sequence ID" value="OsLiXu_11g0007420.02"/>
    <property type="gene ID" value="OsLiXu_11g0007420"/>
</dbReference>
<dbReference type="Gramene" id="OsMH63_11G007450_01">
    <property type="protein sequence ID" value="OsMH63_11G007450_01"/>
    <property type="gene ID" value="OsMH63_11G007450"/>
</dbReference>
<dbReference type="Gramene" id="OsMH63_11G007450_02">
    <property type="protein sequence ID" value="OsMH63_11G007450_02"/>
    <property type="gene ID" value="OsMH63_11G007450"/>
</dbReference>
<dbReference type="Gramene" id="OsPr106_11g0007320.01">
    <property type="protein sequence ID" value="OsPr106_11g0007320.01"/>
    <property type="gene ID" value="OsPr106_11g0007320"/>
</dbReference>
<dbReference type="Gramene" id="OsPr106_11g0007320.02">
    <property type="protein sequence ID" value="OsPr106_11g0007320.02"/>
    <property type="gene ID" value="OsPr106_11g0007320"/>
</dbReference>
<dbReference type="Gramene" id="OsZS97_11G007570_01">
    <property type="protein sequence ID" value="OsZS97_11G007570_01"/>
    <property type="gene ID" value="OsZS97_11G007570"/>
</dbReference>
<dbReference type="Gramene" id="OsZS97_11G007570_02">
    <property type="protein sequence ID" value="OsZS97_11G007570_02"/>
    <property type="gene ID" value="OsZS97_11G007570"/>
</dbReference>
<dbReference type="HOGENOM" id="CLU_016218_1_3_1"/>
<dbReference type="OMA" id="CETRPLN"/>
<dbReference type="UniPathway" id="UPA00904">
    <property type="reaction ID" value="UER00874"/>
</dbReference>
<dbReference type="Proteomes" id="UP000007015">
    <property type="component" value="Chromosome 11"/>
</dbReference>
<dbReference type="GO" id="GO:0005737">
    <property type="term" value="C:cytoplasm"/>
    <property type="evidence" value="ECO:0007669"/>
    <property type="project" value="UniProtKB-SubCell"/>
</dbReference>
<dbReference type="GO" id="GO:0005634">
    <property type="term" value="C:nucleus"/>
    <property type="evidence" value="ECO:0007669"/>
    <property type="project" value="UniProtKB-SubCell"/>
</dbReference>
<dbReference type="GO" id="GO:0046523">
    <property type="term" value="F:S-methyl-5-thioribose-1-phosphate isomerase activity"/>
    <property type="evidence" value="ECO:0007669"/>
    <property type="project" value="UniProtKB-UniRule"/>
</dbReference>
<dbReference type="GO" id="GO:0019509">
    <property type="term" value="P:L-methionine salvage from methylthioadenosine"/>
    <property type="evidence" value="ECO:0007669"/>
    <property type="project" value="UniProtKB-UniRule"/>
</dbReference>
<dbReference type="FunFam" id="1.20.120.420:FF:000002">
    <property type="entry name" value="Methylthioribose-1-phosphate isomerase"/>
    <property type="match status" value="1"/>
</dbReference>
<dbReference type="FunFam" id="3.40.50.10470:FF:000003">
    <property type="entry name" value="Methylthioribose-1-phosphate isomerase"/>
    <property type="match status" value="1"/>
</dbReference>
<dbReference type="Gene3D" id="1.20.120.420">
    <property type="entry name" value="translation initiation factor eif-2b, domain 1"/>
    <property type="match status" value="1"/>
</dbReference>
<dbReference type="Gene3D" id="3.40.50.10470">
    <property type="entry name" value="Translation initiation factor eif-2b, domain 2"/>
    <property type="match status" value="1"/>
</dbReference>
<dbReference type="HAMAP" id="MF_01678">
    <property type="entry name" value="Salvage_MtnA"/>
    <property type="match status" value="1"/>
</dbReference>
<dbReference type="InterPro" id="IPR000649">
    <property type="entry name" value="IF-2B-related"/>
</dbReference>
<dbReference type="InterPro" id="IPR005251">
    <property type="entry name" value="IF-M1Pi"/>
</dbReference>
<dbReference type="InterPro" id="IPR042529">
    <property type="entry name" value="IF_2B-like_C"/>
</dbReference>
<dbReference type="InterPro" id="IPR011559">
    <property type="entry name" value="Initiation_fac_2B_a/b/d"/>
</dbReference>
<dbReference type="InterPro" id="IPR027363">
    <property type="entry name" value="M1Pi_N"/>
</dbReference>
<dbReference type="InterPro" id="IPR037171">
    <property type="entry name" value="NagB/RpiA_transferase-like"/>
</dbReference>
<dbReference type="NCBIfam" id="TIGR00524">
    <property type="entry name" value="eIF-2B_rel"/>
    <property type="match status" value="1"/>
</dbReference>
<dbReference type="NCBIfam" id="NF004326">
    <property type="entry name" value="PRK05720.1"/>
    <property type="match status" value="1"/>
</dbReference>
<dbReference type="NCBIfam" id="TIGR00512">
    <property type="entry name" value="salvage_mtnA"/>
    <property type="match status" value="1"/>
</dbReference>
<dbReference type="PANTHER" id="PTHR43475">
    <property type="entry name" value="METHYLTHIORIBOSE-1-PHOSPHATE ISOMERASE"/>
    <property type="match status" value="1"/>
</dbReference>
<dbReference type="PANTHER" id="PTHR43475:SF1">
    <property type="entry name" value="METHYLTHIORIBOSE-1-PHOSPHATE ISOMERASE"/>
    <property type="match status" value="1"/>
</dbReference>
<dbReference type="Pfam" id="PF01008">
    <property type="entry name" value="IF-2B"/>
    <property type="match status" value="1"/>
</dbReference>
<dbReference type="SUPFAM" id="SSF100950">
    <property type="entry name" value="NagB/RpiA/CoA transferase-like"/>
    <property type="match status" value="1"/>
</dbReference>
<accession>A2ZCP0</accession>
<gene>
    <name type="ORF">OsI_35550</name>
</gene>
<name>MTNA_ORYSI</name>
<sequence length="374" mass="39480">MGELGALQSIVYHRGSLRLLDQRKLPLEVDYIDVKCSGDGWNAIRDMVVRGAPAIAIAAALALAVEVSGLEDFTGTPAEAAAFVSEKLEYLVSSRPTAVNLSDAATKLRSLVSRTAETEKDAKAIFQAYIDAAETMLVDDVSDNKAIGSHGAEFLKQKLEVSKDISVLTHCNTGSLATAGYGTALGVIRALHSGGILEKAFCTETRPFNQGSRLTAFELVHDKVPATLIADSAAAALMKSGCIQAVIVGADRIAANGDTANKIGTYNLAISAKHHGVQFYVAAPITSIDLSLPSGEQIVIEERSPNELLNSEGGLGKQVAASGISVWNPAFDVTPANLITAIITEKGVITKSDADETFNIKDFIQSAKLYSTMQ</sequence>
<evidence type="ECO:0000255" key="1">
    <source>
        <dbReference type="HAMAP-Rule" id="MF_03119"/>
    </source>
</evidence>
<organism>
    <name type="scientific">Oryza sativa subsp. indica</name>
    <name type="common">Rice</name>
    <dbReference type="NCBI Taxonomy" id="39946"/>
    <lineage>
        <taxon>Eukaryota</taxon>
        <taxon>Viridiplantae</taxon>
        <taxon>Streptophyta</taxon>
        <taxon>Embryophyta</taxon>
        <taxon>Tracheophyta</taxon>
        <taxon>Spermatophyta</taxon>
        <taxon>Magnoliopsida</taxon>
        <taxon>Liliopsida</taxon>
        <taxon>Poales</taxon>
        <taxon>Poaceae</taxon>
        <taxon>BOP clade</taxon>
        <taxon>Oryzoideae</taxon>
        <taxon>Oryzeae</taxon>
        <taxon>Oryzinae</taxon>
        <taxon>Oryza</taxon>
        <taxon>Oryza sativa</taxon>
    </lineage>
</organism>